<name>ADD_LACCB</name>
<organism>
    <name type="scientific">Lacticaseibacillus casei (strain BL23)</name>
    <name type="common">Lactobacillus casei</name>
    <dbReference type="NCBI Taxonomy" id="543734"/>
    <lineage>
        <taxon>Bacteria</taxon>
        <taxon>Bacillati</taxon>
        <taxon>Bacillota</taxon>
        <taxon>Bacilli</taxon>
        <taxon>Lactobacillales</taxon>
        <taxon>Lactobacillaceae</taxon>
        <taxon>Lacticaseibacillus</taxon>
    </lineage>
</organism>
<proteinExistence type="inferred from homology"/>
<dbReference type="EC" id="3.5.4.4" evidence="1"/>
<dbReference type="EMBL" id="FM177140">
    <property type="protein sequence ID" value="CAQ67455.1"/>
    <property type="molecule type" value="Genomic_DNA"/>
</dbReference>
<dbReference type="SMR" id="B3W9T6"/>
<dbReference type="KEGG" id="lcb:LCABL_23880"/>
<dbReference type="HOGENOM" id="CLU_039228_0_0_9"/>
<dbReference type="GO" id="GO:0005829">
    <property type="term" value="C:cytosol"/>
    <property type="evidence" value="ECO:0007669"/>
    <property type="project" value="TreeGrafter"/>
</dbReference>
<dbReference type="GO" id="GO:0046936">
    <property type="term" value="F:2'-deoxyadenosine deaminase activity"/>
    <property type="evidence" value="ECO:0007669"/>
    <property type="project" value="RHEA"/>
</dbReference>
<dbReference type="GO" id="GO:0004000">
    <property type="term" value="F:adenosine deaminase activity"/>
    <property type="evidence" value="ECO:0007669"/>
    <property type="project" value="UniProtKB-UniRule"/>
</dbReference>
<dbReference type="GO" id="GO:0008270">
    <property type="term" value="F:zinc ion binding"/>
    <property type="evidence" value="ECO:0007669"/>
    <property type="project" value="UniProtKB-UniRule"/>
</dbReference>
<dbReference type="GO" id="GO:0006154">
    <property type="term" value="P:adenosine catabolic process"/>
    <property type="evidence" value="ECO:0007669"/>
    <property type="project" value="TreeGrafter"/>
</dbReference>
<dbReference type="GO" id="GO:0043103">
    <property type="term" value="P:hypoxanthine salvage"/>
    <property type="evidence" value="ECO:0007669"/>
    <property type="project" value="TreeGrafter"/>
</dbReference>
<dbReference type="GO" id="GO:0046103">
    <property type="term" value="P:inosine biosynthetic process"/>
    <property type="evidence" value="ECO:0007669"/>
    <property type="project" value="TreeGrafter"/>
</dbReference>
<dbReference type="GO" id="GO:0009117">
    <property type="term" value="P:nucleotide metabolic process"/>
    <property type="evidence" value="ECO:0007669"/>
    <property type="project" value="UniProtKB-KW"/>
</dbReference>
<dbReference type="GO" id="GO:0009168">
    <property type="term" value="P:purine ribonucleoside monophosphate biosynthetic process"/>
    <property type="evidence" value="ECO:0007669"/>
    <property type="project" value="UniProtKB-UniRule"/>
</dbReference>
<dbReference type="Gene3D" id="3.20.20.140">
    <property type="entry name" value="Metal-dependent hydrolases"/>
    <property type="match status" value="1"/>
</dbReference>
<dbReference type="HAMAP" id="MF_00540">
    <property type="entry name" value="A_deaminase"/>
    <property type="match status" value="1"/>
</dbReference>
<dbReference type="InterPro" id="IPR028893">
    <property type="entry name" value="A_deaminase"/>
</dbReference>
<dbReference type="InterPro" id="IPR001365">
    <property type="entry name" value="A_deaminase_dom"/>
</dbReference>
<dbReference type="InterPro" id="IPR006330">
    <property type="entry name" value="Ado/ade_deaminase"/>
</dbReference>
<dbReference type="InterPro" id="IPR032466">
    <property type="entry name" value="Metal_Hydrolase"/>
</dbReference>
<dbReference type="NCBIfam" id="TIGR01430">
    <property type="entry name" value="aden_deam"/>
    <property type="match status" value="1"/>
</dbReference>
<dbReference type="PANTHER" id="PTHR11409">
    <property type="entry name" value="ADENOSINE DEAMINASE"/>
    <property type="match status" value="1"/>
</dbReference>
<dbReference type="PANTHER" id="PTHR11409:SF43">
    <property type="entry name" value="ADENOSINE DEAMINASE"/>
    <property type="match status" value="1"/>
</dbReference>
<dbReference type="Pfam" id="PF00962">
    <property type="entry name" value="A_deaminase"/>
    <property type="match status" value="1"/>
</dbReference>
<dbReference type="SUPFAM" id="SSF51556">
    <property type="entry name" value="Metallo-dependent hydrolases"/>
    <property type="match status" value="1"/>
</dbReference>
<protein>
    <recommendedName>
        <fullName evidence="1">Adenosine deaminase</fullName>
        <ecNumber evidence="1">3.5.4.4</ecNumber>
    </recommendedName>
    <alternativeName>
        <fullName evidence="1">Adenosine aminohydrolase</fullName>
    </alternativeName>
</protein>
<keyword id="KW-0378">Hydrolase</keyword>
<keyword id="KW-0479">Metal-binding</keyword>
<keyword id="KW-0546">Nucleotide metabolism</keyword>
<keyword id="KW-0862">Zinc</keyword>
<sequence length="339" mass="37031">MDFQTLHQLSKTELHCHLDGSLSLSCIRQLAKMIDRKLPATDDELRRLVQAPADSENLGDYLKAFDFVAPLLQTKKALQLAAYDVVEQAAEENVRYIEIRFAPVFSLAGGLSLVEATQAVIEGLHQGMATYDIMAKALVCGMRQLPNTDNQTMFKTTAPLLGSTLVGGDFAGNEADFPTNVCAPAIKTAQSLGVPLTFHAGECHCPQNIAEAVRLGIPRIGHATACFDQPALIEKIVETGTTVELCLTSNLQTKAARTLAEFPYQALKKAGAKITINTDNRTVSNTTLTQEYQRYQQAFGTTAVDFLAFNLNAIDAAFIPDADKKSLRDRLHQDYATYC</sequence>
<reference key="1">
    <citation type="submission" date="2008-06" db="EMBL/GenBank/DDBJ databases">
        <title>Lactobacillus casei BL23 complete genome sequence.</title>
        <authorList>
            <person name="Maze A."/>
            <person name="Boel G."/>
            <person name="Bourand A."/>
            <person name="Loux V."/>
            <person name="Gibrat J.F."/>
            <person name="Zuniga M."/>
            <person name="Hartke A."/>
            <person name="Deutscher J."/>
        </authorList>
    </citation>
    <scope>NUCLEOTIDE SEQUENCE [LARGE SCALE GENOMIC DNA]</scope>
    <source>
        <strain>BL23</strain>
    </source>
</reference>
<evidence type="ECO:0000255" key="1">
    <source>
        <dbReference type="HAMAP-Rule" id="MF_00540"/>
    </source>
</evidence>
<comment type="function">
    <text evidence="1">Catalyzes the hydrolytic deamination of adenosine and 2-deoxyadenosine.</text>
</comment>
<comment type="catalytic activity">
    <reaction evidence="1">
        <text>adenosine + H2O + H(+) = inosine + NH4(+)</text>
        <dbReference type="Rhea" id="RHEA:24408"/>
        <dbReference type="ChEBI" id="CHEBI:15377"/>
        <dbReference type="ChEBI" id="CHEBI:15378"/>
        <dbReference type="ChEBI" id="CHEBI:16335"/>
        <dbReference type="ChEBI" id="CHEBI:17596"/>
        <dbReference type="ChEBI" id="CHEBI:28938"/>
        <dbReference type="EC" id="3.5.4.4"/>
    </reaction>
    <physiologicalReaction direction="left-to-right" evidence="1">
        <dbReference type="Rhea" id="RHEA:24409"/>
    </physiologicalReaction>
</comment>
<comment type="catalytic activity">
    <reaction evidence="1">
        <text>2'-deoxyadenosine + H2O + H(+) = 2'-deoxyinosine + NH4(+)</text>
        <dbReference type="Rhea" id="RHEA:28190"/>
        <dbReference type="ChEBI" id="CHEBI:15377"/>
        <dbReference type="ChEBI" id="CHEBI:15378"/>
        <dbReference type="ChEBI" id="CHEBI:17256"/>
        <dbReference type="ChEBI" id="CHEBI:28938"/>
        <dbReference type="ChEBI" id="CHEBI:28997"/>
        <dbReference type="EC" id="3.5.4.4"/>
    </reaction>
    <physiologicalReaction direction="left-to-right" evidence="1">
        <dbReference type="Rhea" id="RHEA:28191"/>
    </physiologicalReaction>
</comment>
<comment type="cofactor">
    <cofactor evidence="1">
        <name>Zn(2+)</name>
        <dbReference type="ChEBI" id="CHEBI:29105"/>
    </cofactor>
    <text evidence="1">Binds 1 zinc ion per subunit.</text>
</comment>
<comment type="similarity">
    <text evidence="1">Belongs to the metallo-dependent hydrolases superfamily. Adenosine and AMP deaminases family. Adenosine deaminase subfamily.</text>
</comment>
<accession>B3W9T6</accession>
<feature type="chain" id="PRO_1000128850" description="Adenosine deaminase">
    <location>
        <begin position="1"/>
        <end position="339"/>
    </location>
</feature>
<feature type="active site" description="Proton donor" evidence="1">
    <location>
        <position position="202"/>
    </location>
</feature>
<feature type="binding site" evidence="1">
    <location>
        <position position="15"/>
    </location>
    <ligand>
        <name>Zn(2+)</name>
        <dbReference type="ChEBI" id="CHEBI:29105"/>
        <note>catalytic</note>
    </ligand>
</feature>
<feature type="binding site" evidence="1">
    <location>
        <position position="17"/>
    </location>
    <ligand>
        <name>substrate</name>
    </ligand>
</feature>
<feature type="binding site" evidence="1">
    <location>
        <position position="17"/>
    </location>
    <ligand>
        <name>Zn(2+)</name>
        <dbReference type="ChEBI" id="CHEBI:29105"/>
        <note>catalytic</note>
    </ligand>
</feature>
<feature type="binding site" evidence="1">
    <location>
        <position position="19"/>
    </location>
    <ligand>
        <name>substrate</name>
    </ligand>
</feature>
<feature type="binding site" evidence="1">
    <location>
        <position position="172"/>
    </location>
    <ligand>
        <name>substrate</name>
    </ligand>
</feature>
<feature type="binding site" evidence="1">
    <location>
        <position position="199"/>
    </location>
    <ligand>
        <name>Zn(2+)</name>
        <dbReference type="ChEBI" id="CHEBI:29105"/>
        <note>catalytic</note>
    </ligand>
</feature>
<feature type="binding site" evidence="1">
    <location>
        <position position="279"/>
    </location>
    <ligand>
        <name>Zn(2+)</name>
        <dbReference type="ChEBI" id="CHEBI:29105"/>
        <note>catalytic</note>
    </ligand>
</feature>
<feature type="site" description="Important for catalytic activity" evidence="1">
    <location>
        <position position="222"/>
    </location>
</feature>
<gene>
    <name evidence="1" type="primary">add</name>
    <name type="ordered locus">LCABL_23880</name>
</gene>